<gene>
    <name type="ordered locus">Cbei_1107</name>
</gene>
<sequence>MDKEAKYVYIPDQEGNDVKFEVIIYFEIEKLKGQYIIATPAFEETDEAYAFKIFKDEDGSDIFIALEDDDEEFEMVLETYETLMNEDGLIEE</sequence>
<organism>
    <name type="scientific">Clostridium beijerinckii (strain ATCC 51743 / NCIMB 8052)</name>
    <name type="common">Clostridium acetobutylicum</name>
    <dbReference type="NCBI Taxonomy" id="290402"/>
    <lineage>
        <taxon>Bacteria</taxon>
        <taxon>Bacillati</taxon>
        <taxon>Bacillota</taxon>
        <taxon>Clostridia</taxon>
        <taxon>Eubacteriales</taxon>
        <taxon>Clostridiaceae</taxon>
        <taxon>Clostridium</taxon>
    </lineage>
</organism>
<evidence type="ECO:0000255" key="1">
    <source>
        <dbReference type="HAMAP-Rule" id="MF_01448"/>
    </source>
</evidence>
<protein>
    <recommendedName>
        <fullName evidence="1">UPF0473 protein Cbei_1107</fullName>
    </recommendedName>
</protein>
<feature type="chain" id="PRO_1000087500" description="UPF0473 protein Cbei_1107">
    <location>
        <begin position="1"/>
        <end position="92"/>
    </location>
</feature>
<proteinExistence type="inferred from homology"/>
<name>Y1107_CLOB8</name>
<dbReference type="EMBL" id="CP000721">
    <property type="protein sequence ID" value="ABR33289.1"/>
    <property type="molecule type" value="Genomic_DNA"/>
</dbReference>
<dbReference type="RefSeq" id="WP_011968447.1">
    <property type="nucleotide sequence ID" value="NC_009617.1"/>
</dbReference>
<dbReference type="KEGG" id="cbe:Cbei_1107"/>
<dbReference type="HOGENOM" id="CLU_146610_8_0_9"/>
<dbReference type="Proteomes" id="UP000000565">
    <property type="component" value="Chromosome"/>
</dbReference>
<dbReference type="HAMAP" id="MF_01448">
    <property type="entry name" value="UPF0473"/>
    <property type="match status" value="1"/>
</dbReference>
<dbReference type="InterPro" id="IPR009711">
    <property type="entry name" value="UPF0473"/>
</dbReference>
<dbReference type="PANTHER" id="PTHR40066">
    <property type="entry name" value="UPF0473 PROTEIN CBO2561/CLC_2432"/>
    <property type="match status" value="1"/>
</dbReference>
<dbReference type="PANTHER" id="PTHR40066:SF1">
    <property type="entry name" value="UPF0473 PROTEIN CBO2561_CLC_2432"/>
    <property type="match status" value="1"/>
</dbReference>
<dbReference type="Pfam" id="PF06949">
    <property type="entry name" value="DUF1292"/>
    <property type="match status" value="1"/>
</dbReference>
<accession>A6LSF9</accession>
<reference key="1">
    <citation type="submission" date="2007-06" db="EMBL/GenBank/DDBJ databases">
        <title>Complete sequence of Clostridium beijerinckii NCIMB 8052.</title>
        <authorList>
            <consortium name="US DOE Joint Genome Institute"/>
            <person name="Copeland A."/>
            <person name="Lucas S."/>
            <person name="Lapidus A."/>
            <person name="Barry K."/>
            <person name="Detter J.C."/>
            <person name="Glavina del Rio T."/>
            <person name="Hammon N."/>
            <person name="Israni S."/>
            <person name="Dalin E."/>
            <person name="Tice H."/>
            <person name="Pitluck S."/>
            <person name="Sims D."/>
            <person name="Brettin T."/>
            <person name="Bruce D."/>
            <person name="Tapia R."/>
            <person name="Brainard J."/>
            <person name="Schmutz J."/>
            <person name="Larimer F."/>
            <person name="Land M."/>
            <person name="Hauser L."/>
            <person name="Kyrpides N."/>
            <person name="Mikhailova N."/>
            <person name="Bennet G."/>
            <person name="Cann I."/>
            <person name="Chen J.-S."/>
            <person name="Contreras A.L."/>
            <person name="Jones D."/>
            <person name="Kashket E."/>
            <person name="Mitchell W."/>
            <person name="Stoddard S."/>
            <person name="Schwarz W."/>
            <person name="Qureshi N."/>
            <person name="Young M."/>
            <person name="Shi Z."/>
            <person name="Ezeji T."/>
            <person name="White B."/>
            <person name="Blaschek H."/>
            <person name="Richardson P."/>
        </authorList>
    </citation>
    <scope>NUCLEOTIDE SEQUENCE [LARGE SCALE GENOMIC DNA]</scope>
    <source>
        <strain>ATCC 51743 / NCIMB 8052</strain>
    </source>
</reference>
<comment type="similarity">
    <text evidence="1">Belongs to the UPF0473 family.</text>
</comment>